<protein>
    <recommendedName>
        <fullName evidence="1">Ribosomal RNA large subunit methyltransferase E</fullName>
        <ecNumber evidence="1">2.1.1.166</ecNumber>
    </recommendedName>
    <alternativeName>
        <fullName evidence="1">23S rRNA Um2552 methyltransferase</fullName>
    </alternativeName>
    <alternativeName>
        <fullName evidence="1">rRNA (uridine-2'-O-)-methyltransferase</fullName>
    </alternativeName>
</protein>
<sequence>MAKDTTGRMRVTVKSGGRMKLSSKLWLDRQLNDPYVAQAKRDGYRSRAAYKLTEIDDKYHFLKSGQAVVDLGAAPGGWSQVAAKRIGSANGRGKLIAIDLLEMGEIPGVTFAQLDFLDSAAPDKLREMLGGDGADVVMSDMAGNTTGHRKTDQLRIVGLVESAAQFASEVLKPGGIFVAKVFQSGADATLMNQLKRDFATVKHVKPAASRKDSSERYVLAMGFRGTQPAAQEPQEP</sequence>
<proteinExistence type="inferred from homology"/>
<keyword id="KW-0963">Cytoplasm</keyword>
<keyword id="KW-0489">Methyltransferase</keyword>
<keyword id="KW-1185">Reference proteome</keyword>
<keyword id="KW-0698">rRNA processing</keyword>
<keyword id="KW-0949">S-adenosyl-L-methionine</keyword>
<keyword id="KW-0808">Transferase</keyword>
<comment type="function">
    <text evidence="1">Specifically methylates the uridine in position 2552 of 23S rRNA at the 2'-O position of the ribose in the fully assembled 50S ribosomal subunit.</text>
</comment>
<comment type="catalytic activity">
    <reaction evidence="1">
        <text>uridine(2552) in 23S rRNA + S-adenosyl-L-methionine = 2'-O-methyluridine(2552) in 23S rRNA + S-adenosyl-L-homocysteine + H(+)</text>
        <dbReference type="Rhea" id="RHEA:42720"/>
        <dbReference type="Rhea" id="RHEA-COMP:10202"/>
        <dbReference type="Rhea" id="RHEA-COMP:10203"/>
        <dbReference type="ChEBI" id="CHEBI:15378"/>
        <dbReference type="ChEBI" id="CHEBI:57856"/>
        <dbReference type="ChEBI" id="CHEBI:59789"/>
        <dbReference type="ChEBI" id="CHEBI:65315"/>
        <dbReference type="ChEBI" id="CHEBI:74478"/>
        <dbReference type="EC" id="2.1.1.166"/>
    </reaction>
</comment>
<comment type="subcellular location">
    <subcellularLocation>
        <location evidence="1">Cytoplasm</location>
    </subcellularLocation>
</comment>
<comment type="similarity">
    <text evidence="1">Belongs to the class I-like SAM-binding methyltransferase superfamily. RNA methyltransferase RlmE family.</text>
</comment>
<dbReference type="EC" id="2.1.1.166" evidence="1"/>
<dbReference type="EMBL" id="CP000250">
    <property type="protein sequence ID" value="ABD07892.1"/>
    <property type="molecule type" value="Genomic_DNA"/>
</dbReference>
<dbReference type="RefSeq" id="WP_011442076.1">
    <property type="nucleotide sequence ID" value="NC_007778.1"/>
</dbReference>
<dbReference type="SMR" id="Q2IV68"/>
<dbReference type="STRING" id="316058.RPB_3196"/>
<dbReference type="KEGG" id="rpb:RPB_3196"/>
<dbReference type="eggNOG" id="COG0293">
    <property type="taxonomic scope" value="Bacteria"/>
</dbReference>
<dbReference type="HOGENOM" id="CLU_009422_4_0_5"/>
<dbReference type="OrthoDB" id="9790080at2"/>
<dbReference type="Proteomes" id="UP000008809">
    <property type="component" value="Chromosome"/>
</dbReference>
<dbReference type="GO" id="GO:0005737">
    <property type="term" value="C:cytoplasm"/>
    <property type="evidence" value="ECO:0007669"/>
    <property type="project" value="UniProtKB-SubCell"/>
</dbReference>
<dbReference type="GO" id="GO:0008650">
    <property type="term" value="F:rRNA (uridine-2'-O-)-methyltransferase activity"/>
    <property type="evidence" value="ECO:0007669"/>
    <property type="project" value="UniProtKB-UniRule"/>
</dbReference>
<dbReference type="FunFam" id="3.40.50.150:FF:000005">
    <property type="entry name" value="Ribosomal RNA large subunit methyltransferase E"/>
    <property type="match status" value="1"/>
</dbReference>
<dbReference type="Gene3D" id="3.40.50.150">
    <property type="entry name" value="Vaccinia Virus protein VP39"/>
    <property type="match status" value="1"/>
</dbReference>
<dbReference type="HAMAP" id="MF_01547">
    <property type="entry name" value="RNA_methyltr_E"/>
    <property type="match status" value="1"/>
</dbReference>
<dbReference type="InterPro" id="IPR050082">
    <property type="entry name" value="RNA_methyltr_RlmE"/>
</dbReference>
<dbReference type="InterPro" id="IPR002877">
    <property type="entry name" value="RNA_MeTrfase_FtsJ_dom"/>
</dbReference>
<dbReference type="InterPro" id="IPR015507">
    <property type="entry name" value="rRNA-MeTfrase_E"/>
</dbReference>
<dbReference type="InterPro" id="IPR029063">
    <property type="entry name" value="SAM-dependent_MTases_sf"/>
</dbReference>
<dbReference type="PANTHER" id="PTHR10920">
    <property type="entry name" value="RIBOSOMAL RNA METHYLTRANSFERASE"/>
    <property type="match status" value="1"/>
</dbReference>
<dbReference type="PANTHER" id="PTHR10920:SF18">
    <property type="entry name" value="RRNA METHYLTRANSFERASE 2, MITOCHONDRIAL"/>
    <property type="match status" value="1"/>
</dbReference>
<dbReference type="Pfam" id="PF01728">
    <property type="entry name" value="FtsJ"/>
    <property type="match status" value="1"/>
</dbReference>
<dbReference type="PIRSF" id="PIRSF005461">
    <property type="entry name" value="23S_rRNA_mtase"/>
    <property type="match status" value="1"/>
</dbReference>
<dbReference type="SUPFAM" id="SSF53335">
    <property type="entry name" value="S-adenosyl-L-methionine-dependent methyltransferases"/>
    <property type="match status" value="1"/>
</dbReference>
<feature type="chain" id="PRO_0000282789" description="Ribosomal RNA large subunit methyltransferase E">
    <location>
        <begin position="1"/>
        <end position="236"/>
    </location>
</feature>
<feature type="active site" description="Proton acceptor" evidence="1">
    <location>
        <position position="180"/>
    </location>
</feature>
<feature type="binding site" evidence="1">
    <location>
        <position position="76"/>
    </location>
    <ligand>
        <name>S-adenosyl-L-methionine</name>
        <dbReference type="ChEBI" id="CHEBI:59789"/>
    </ligand>
</feature>
<feature type="binding site" evidence="1">
    <location>
        <position position="78"/>
    </location>
    <ligand>
        <name>S-adenosyl-L-methionine</name>
        <dbReference type="ChEBI" id="CHEBI:59789"/>
    </ligand>
</feature>
<feature type="binding site" evidence="1">
    <location>
        <position position="99"/>
    </location>
    <ligand>
        <name>S-adenosyl-L-methionine</name>
        <dbReference type="ChEBI" id="CHEBI:59789"/>
    </ligand>
</feature>
<feature type="binding site" evidence="1">
    <location>
        <position position="115"/>
    </location>
    <ligand>
        <name>S-adenosyl-L-methionine</name>
        <dbReference type="ChEBI" id="CHEBI:59789"/>
    </ligand>
</feature>
<feature type="binding site" evidence="1">
    <location>
        <position position="140"/>
    </location>
    <ligand>
        <name>S-adenosyl-L-methionine</name>
        <dbReference type="ChEBI" id="CHEBI:59789"/>
    </ligand>
</feature>
<gene>
    <name evidence="1" type="primary">rlmE</name>
    <name evidence="1" type="synonym">ftsJ</name>
    <name evidence="1" type="synonym">rrmJ</name>
    <name type="ordered locus">RPB_3196</name>
</gene>
<evidence type="ECO:0000255" key="1">
    <source>
        <dbReference type="HAMAP-Rule" id="MF_01547"/>
    </source>
</evidence>
<accession>Q2IV68</accession>
<name>RLME_RHOP2</name>
<reference key="1">
    <citation type="submission" date="2006-01" db="EMBL/GenBank/DDBJ databases">
        <title>Complete sequence of Rhodopseudomonas palustris HaA2.</title>
        <authorList>
            <consortium name="US DOE Joint Genome Institute"/>
            <person name="Copeland A."/>
            <person name="Lucas S."/>
            <person name="Lapidus A."/>
            <person name="Barry K."/>
            <person name="Detter J.C."/>
            <person name="Glavina T."/>
            <person name="Hammon N."/>
            <person name="Israni S."/>
            <person name="Pitluck S."/>
            <person name="Chain P."/>
            <person name="Malfatti S."/>
            <person name="Shin M."/>
            <person name="Vergez L."/>
            <person name="Schmutz J."/>
            <person name="Larimer F."/>
            <person name="Land M."/>
            <person name="Hauser L."/>
            <person name="Pelletier D.A."/>
            <person name="Kyrpides N."/>
            <person name="Anderson I."/>
            <person name="Oda Y."/>
            <person name="Harwood C.S."/>
            <person name="Richardson P."/>
        </authorList>
    </citation>
    <scope>NUCLEOTIDE SEQUENCE [LARGE SCALE GENOMIC DNA]</scope>
    <source>
        <strain>HaA2</strain>
    </source>
</reference>
<organism>
    <name type="scientific">Rhodopseudomonas palustris (strain HaA2)</name>
    <dbReference type="NCBI Taxonomy" id="316058"/>
    <lineage>
        <taxon>Bacteria</taxon>
        <taxon>Pseudomonadati</taxon>
        <taxon>Pseudomonadota</taxon>
        <taxon>Alphaproteobacteria</taxon>
        <taxon>Hyphomicrobiales</taxon>
        <taxon>Nitrobacteraceae</taxon>
        <taxon>Rhodopseudomonas</taxon>
    </lineage>
</organism>